<accession>A7YWS7</accession>
<sequence>MAPERLRSRALSAFKLRGLMLRGEAVKYLTEALQSINEIELEDALEKIIDAVEKQPLSSNMIERSVVEAAVQECSQSVDETIDHIFNIIGAFDIPRFVYNSERKKFLPLLMTNHPAPNLFGTARDKAELFRERYTILHQRTHRHELFTPPVIGSHPDESGSKFQLKTIETLLGSTSKIGDVIVLGMITQLKEGKFFLEDPTGTIQLDLSKAQFHSGLYTESCFVLAEGWFEDQVFHVNAFGFPPTEPSSTTRAYYGNTNFFGGPSNTSVKTSAKLKQLEDENKDAMFVFISDVWLDQVEVLEKLHIMFSGYSPAPPTCFILCGNFSSAPYGKNQVQALKDSLKTLADIICGYPNIHQSSRFVFVPGPEDPGFGSILPRPPFAESITNEFRQRVPFSVFTTNPCRIQYCTQEIIVFREDLVNKMCRNCVRFPSSNLDIPNHFVKTVLSQGHLTPLPLYVCPVYWAYDYALRVYPVPDLLVIADKYDPFTLTNTECLCINPGSFPRSGFSFKVFYPSNKVVEDSKLQGF</sequence>
<comment type="function">
    <text evidence="2 3">Accessory component of the DNA polymerase epsilon complex (By similarity). Participates in DNA repair and in chromosomal DNA replication (By similarity).</text>
</comment>
<comment type="subunit">
    <text evidence="3">Component of the DNA polymerase epsilon complex consisting of four subunits: the catalytic subunit POLE and the accessory subunits POLE2, POLE3 and POLE4.</text>
</comment>
<comment type="subcellular location">
    <subcellularLocation>
        <location evidence="1">Nucleus</location>
    </subcellularLocation>
</comment>
<comment type="miscellaneous">
    <text>In eukaryotes there are five DNA polymerases: alpha, beta, gamma, delta, and epsilon which are responsible for different reactions of DNA synthesis.</text>
</comment>
<comment type="similarity">
    <text evidence="4">Belongs to the DNA polymerase epsilon subunit B family.</text>
</comment>
<proteinExistence type="evidence at transcript level"/>
<feature type="chain" id="PRO_0000328401" description="DNA polymerase epsilon subunit 2">
    <location>
        <begin position="1"/>
        <end position="527"/>
    </location>
</feature>
<gene>
    <name type="primary">POLE2</name>
</gene>
<name>DPOE2_BOVIN</name>
<organism>
    <name type="scientific">Bos taurus</name>
    <name type="common">Bovine</name>
    <dbReference type="NCBI Taxonomy" id="9913"/>
    <lineage>
        <taxon>Eukaryota</taxon>
        <taxon>Metazoa</taxon>
        <taxon>Chordata</taxon>
        <taxon>Craniata</taxon>
        <taxon>Vertebrata</taxon>
        <taxon>Euteleostomi</taxon>
        <taxon>Mammalia</taxon>
        <taxon>Eutheria</taxon>
        <taxon>Laurasiatheria</taxon>
        <taxon>Artiodactyla</taxon>
        <taxon>Ruminantia</taxon>
        <taxon>Pecora</taxon>
        <taxon>Bovidae</taxon>
        <taxon>Bovinae</taxon>
        <taxon>Bos</taxon>
    </lineage>
</organism>
<dbReference type="EMBL" id="BC134762">
    <property type="protein sequence ID" value="AAI34763.1"/>
    <property type="molecule type" value="mRNA"/>
</dbReference>
<dbReference type="RefSeq" id="NP_001098853.1">
    <property type="nucleotide sequence ID" value="NM_001105383.2"/>
</dbReference>
<dbReference type="SMR" id="A7YWS7"/>
<dbReference type="CORUM" id="A7YWS7"/>
<dbReference type="FunCoup" id="A7YWS7">
    <property type="interactions" value="1156"/>
</dbReference>
<dbReference type="STRING" id="9913.ENSBTAP00000006488"/>
<dbReference type="PaxDb" id="9913-ENSBTAP00000006488"/>
<dbReference type="GeneID" id="518653"/>
<dbReference type="KEGG" id="bta:518653"/>
<dbReference type="CTD" id="5427"/>
<dbReference type="eggNOG" id="KOG3818">
    <property type="taxonomic scope" value="Eukaryota"/>
</dbReference>
<dbReference type="InParanoid" id="A7YWS7"/>
<dbReference type="OrthoDB" id="10254730at2759"/>
<dbReference type="Proteomes" id="UP000009136">
    <property type="component" value="Unplaced"/>
</dbReference>
<dbReference type="GO" id="GO:0008622">
    <property type="term" value="C:epsilon DNA polymerase complex"/>
    <property type="evidence" value="ECO:0000250"/>
    <property type="project" value="UniProtKB"/>
</dbReference>
<dbReference type="GO" id="GO:0003677">
    <property type="term" value="F:DNA binding"/>
    <property type="evidence" value="ECO:0007669"/>
    <property type="project" value="UniProtKB-KW"/>
</dbReference>
<dbReference type="GO" id="GO:0006261">
    <property type="term" value="P:DNA-templated DNA replication"/>
    <property type="evidence" value="ECO:0000318"/>
    <property type="project" value="GO_Central"/>
</dbReference>
<dbReference type="GO" id="GO:0042276">
    <property type="term" value="P:error-prone translesion synthesis"/>
    <property type="evidence" value="ECO:0000318"/>
    <property type="project" value="GO_Central"/>
</dbReference>
<dbReference type="FunFam" id="1.10.8.60:FF:000053">
    <property type="entry name" value="DNA polymerase epsilon subunit"/>
    <property type="match status" value="1"/>
</dbReference>
<dbReference type="Gene3D" id="1.10.8.60">
    <property type="match status" value="1"/>
</dbReference>
<dbReference type="Gene3D" id="3.60.21.60">
    <property type="match status" value="1"/>
</dbReference>
<dbReference type="InterPro" id="IPR007185">
    <property type="entry name" value="DNA_pol_a/d/e_bsu"/>
</dbReference>
<dbReference type="InterPro" id="IPR024639">
    <property type="entry name" value="DNA_pol_e_bsu_N"/>
</dbReference>
<dbReference type="InterPro" id="IPR016266">
    <property type="entry name" value="POLE2"/>
</dbReference>
<dbReference type="PANTHER" id="PTHR12708:SF0">
    <property type="entry name" value="DNA POLYMERASE EPSILON SUBUNIT 2"/>
    <property type="match status" value="1"/>
</dbReference>
<dbReference type="PANTHER" id="PTHR12708">
    <property type="entry name" value="DNA POLYMERASE EPSILON SUBUNIT B"/>
    <property type="match status" value="1"/>
</dbReference>
<dbReference type="Pfam" id="PF04042">
    <property type="entry name" value="DNA_pol_E_B"/>
    <property type="match status" value="1"/>
</dbReference>
<dbReference type="Pfam" id="PF12213">
    <property type="entry name" value="Dpoe2NT"/>
    <property type="match status" value="1"/>
</dbReference>
<dbReference type="PIRSF" id="PIRSF000799">
    <property type="entry name" value="DNA_pol_eps_2"/>
    <property type="match status" value="1"/>
</dbReference>
<keyword id="KW-0235">DNA replication</keyword>
<keyword id="KW-0238">DNA-binding</keyword>
<keyword id="KW-0539">Nucleus</keyword>
<keyword id="KW-1185">Reference proteome</keyword>
<reference key="1">
    <citation type="submission" date="2007-03" db="EMBL/GenBank/DDBJ databases">
        <authorList>
            <consortium name="NIH - Mammalian Gene Collection (MGC) project"/>
        </authorList>
    </citation>
    <scope>NUCLEOTIDE SEQUENCE [LARGE SCALE MRNA]</scope>
    <source>
        <strain>Hereford</strain>
        <tissue>Thymus</tissue>
    </source>
</reference>
<protein>
    <recommendedName>
        <fullName>DNA polymerase epsilon subunit 2</fullName>
    </recommendedName>
    <alternativeName>
        <fullName>DNA polymerase II subunit 2</fullName>
    </alternativeName>
    <alternativeName>
        <fullName>DNA polymerase epsilon subunit B</fullName>
    </alternativeName>
</protein>
<evidence type="ECO:0000250" key="1"/>
<evidence type="ECO:0000250" key="2">
    <source>
        <dbReference type="UniProtKB" id="P24482"/>
    </source>
</evidence>
<evidence type="ECO:0000250" key="3">
    <source>
        <dbReference type="UniProtKB" id="P56282"/>
    </source>
</evidence>
<evidence type="ECO:0000305" key="4"/>